<keyword id="KW-0997">Cell inner membrane</keyword>
<keyword id="KW-1003">Cell membrane</keyword>
<keyword id="KW-0472">Membrane</keyword>
<keyword id="KW-0479">Metal-binding</keyword>
<keyword id="KW-1185">Reference proteome</keyword>
<keyword id="KW-0813">Transport</keyword>
<keyword id="KW-0862">Zinc</keyword>
<comment type="function">
    <text evidence="1">Part of an energy-coupled inorganic carbon pump.</text>
</comment>
<comment type="cofactor">
    <cofactor evidence="1">
        <name>Zn(2+)</name>
        <dbReference type="ChEBI" id="CHEBI:29105"/>
    </cofactor>
</comment>
<comment type="subunit">
    <text evidence="1">Forms a complex with DabB.</text>
</comment>
<comment type="subcellular location">
    <subcellularLocation>
        <location evidence="1">Cell inner membrane</location>
        <topology evidence="1">Peripheral membrane protein</topology>
    </subcellularLocation>
</comment>
<comment type="similarity">
    <text evidence="1">Belongs to the inorganic carbon transporter (TC 9.A.2) DabA family.</text>
</comment>
<accession>C6X808</accession>
<evidence type="ECO:0000255" key="1">
    <source>
        <dbReference type="HAMAP-Rule" id="MF_01871"/>
    </source>
</evidence>
<evidence type="ECO:0000256" key="2">
    <source>
        <dbReference type="SAM" id="MobiDB-lite"/>
    </source>
</evidence>
<feature type="chain" id="PRO_0000387277" description="Probable inorganic carbon transporter subunit DabA">
    <location>
        <begin position="1"/>
        <end position="853"/>
    </location>
</feature>
<feature type="region of interest" description="Disordered" evidence="2">
    <location>
        <begin position="1"/>
        <end position="21"/>
    </location>
</feature>
<feature type="compositionally biased region" description="Polar residues" evidence="2">
    <location>
        <begin position="7"/>
        <end position="21"/>
    </location>
</feature>
<feature type="binding site" evidence="1">
    <location>
        <position position="364"/>
    </location>
    <ligand>
        <name>Zn(2+)</name>
        <dbReference type="ChEBI" id="CHEBI:29105"/>
    </ligand>
</feature>
<feature type="binding site" evidence="1">
    <location>
        <position position="366"/>
    </location>
    <ligand>
        <name>Zn(2+)</name>
        <dbReference type="ChEBI" id="CHEBI:29105"/>
    </ligand>
</feature>
<feature type="binding site" evidence="1">
    <location>
        <position position="546"/>
    </location>
    <ligand>
        <name>Zn(2+)</name>
        <dbReference type="ChEBI" id="CHEBI:29105"/>
    </ligand>
</feature>
<feature type="binding site" evidence="1">
    <location>
        <position position="561"/>
    </location>
    <ligand>
        <name>Zn(2+)</name>
        <dbReference type="ChEBI" id="CHEBI:29105"/>
    </ligand>
</feature>
<reference key="1">
    <citation type="submission" date="2009-07" db="EMBL/GenBank/DDBJ databases">
        <title>Complete sequence of chromosome of Methylovorus sp. SIP3-4.</title>
        <authorList>
            <person name="Lucas S."/>
            <person name="Copeland A."/>
            <person name="Lapidus A."/>
            <person name="Glavina del Rio T."/>
            <person name="Tice H."/>
            <person name="Bruce D."/>
            <person name="Goodwin L."/>
            <person name="Pitluck S."/>
            <person name="Clum A."/>
            <person name="Larimer F."/>
            <person name="Land M."/>
            <person name="Hauser L."/>
            <person name="Kyrpides N."/>
            <person name="Mikhailova N."/>
            <person name="Kayluzhnaya M."/>
            <person name="Chistoserdova L."/>
        </authorList>
    </citation>
    <scope>NUCLEOTIDE SEQUENCE [LARGE SCALE GENOMIC DNA]</scope>
    <source>
        <strain>SIP3-4</strain>
    </source>
</reference>
<dbReference type="EMBL" id="CP001674">
    <property type="protein sequence ID" value="ACT51335.1"/>
    <property type="molecule type" value="Genomic_DNA"/>
</dbReference>
<dbReference type="RefSeq" id="WP_015830682.1">
    <property type="nucleotide sequence ID" value="NC_012969.1"/>
</dbReference>
<dbReference type="STRING" id="582744.Msip34_2093"/>
<dbReference type="KEGG" id="mei:Msip34_2093"/>
<dbReference type="eggNOG" id="COG3002">
    <property type="taxonomic scope" value="Bacteria"/>
</dbReference>
<dbReference type="HOGENOM" id="CLU_009885_1_0_4"/>
<dbReference type="OrthoDB" id="9805101at2"/>
<dbReference type="Proteomes" id="UP000002743">
    <property type="component" value="Chromosome"/>
</dbReference>
<dbReference type="GO" id="GO:0005886">
    <property type="term" value="C:plasma membrane"/>
    <property type="evidence" value="ECO:0007669"/>
    <property type="project" value="UniProtKB-SubCell"/>
</dbReference>
<dbReference type="GO" id="GO:0008270">
    <property type="term" value="F:zinc ion binding"/>
    <property type="evidence" value="ECO:0007669"/>
    <property type="project" value="UniProtKB-UniRule"/>
</dbReference>
<dbReference type="HAMAP" id="MF_01871">
    <property type="entry name" value="DabA"/>
    <property type="match status" value="1"/>
</dbReference>
<dbReference type="InterPro" id="IPR018752">
    <property type="entry name" value="DabA"/>
</dbReference>
<dbReference type="PANTHER" id="PTHR38344:SF1">
    <property type="entry name" value="INORGANIC CARBON TRANSPORTER SUBUNIT DABA-RELATED"/>
    <property type="match status" value="1"/>
</dbReference>
<dbReference type="PANTHER" id="PTHR38344">
    <property type="entry name" value="UPF0753 PROTEIN AQ_863"/>
    <property type="match status" value="1"/>
</dbReference>
<dbReference type="Pfam" id="PF10070">
    <property type="entry name" value="DabA"/>
    <property type="match status" value="1"/>
</dbReference>
<name>DABA_METGS</name>
<protein>
    <recommendedName>
        <fullName evidence="1">Probable inorganic carbon transporter subunit DabA</fullName>
    </recommendedName>
</protein>
<sequence>MSHANSEETMMNTAVAHPSTSKAKADKDILHTQIAQACEQACQAIAPTWPLDRAIAVNPHWSRIGMPVRKVAARMAVLGGIQVFPPRNLQRQAWDEGRVSAADLAQTLQQLPEAQAAGLSPGDCITALHSEPALEHLPLLIDVLDNDPNRHTRLSWRQAITHQVSQTCAAYFDEHQADWHPERTQGLYAFWRETLQHDHGIGLLMGLPHIGQAIDALPVTAQDAERWVLERLGLPQAVWADYLESVLLTVNGWASWCAYLGWQAKLENGEDAHLGELLAIRLAWGALLLECKDDKANDQAFVTLQRAWEHAPLLLLAAERALLVDEVWQVALEIGYQRELAAKLISAGKTAPGSQAIEVQAAFCIDVRSEPLRRALETAWPGIQTLGFAGFFGLPVAYTPLATQARRPQLPGLLAPAMEVVDSIISAEPEKRNADAALQSASVRSRQYRFAVTDQWKAGSRWPGAAFSFVEAAGLGYLGKIGQWLWPGLQPRSRDDLAGLPARHQSICRPHLIGVGLEAKIDLAARVLQGMGLTRELAPMVLLVGHGSQSANNAHAAGLDCGACCGQTGEVNARSLALLLNEPEVRQGLQAKGIAVPSHTVFVAALHNTTTDEIEGFDLDLMPEDARARWQTLQQVFAQAGNQVRRERSPSLQLDAQASDDALLEQLRRRANDGAQTRPEWGLAGNAAFIIAPRQRSLGIGLEGRSFLHDYDASQDTDGSVLELLMTAPMLVTHWINWQYHASTCDPQRLGSGNKLLHNVVGGNLGVFEGNGGDLRIGLSRQSLHDGKHWIHEPLRLTVVIEAPQAAIEAVIAKHAVVKQLVDNGWLHLWHVESSHLQRYDHGTWSKLELEQA</sequence>
<proteinExistence type="inferred from homology"/>
<gene>
    <name evidence="1" type="primary">dabA</name>
    <name type="ordered locus">Msip34_2093</name>
</gene>
<organism>
    <name type="scientific">Methylovorus glucosotrophus (strain SIP3-4)</name>
    <dbReference type="NCBI Taxonomy" id="582744"/>
    <lineage>
        <taxon>Bacteria</taxon>
        <taxon>Pseudomonadati</taxon>
        <taxon>Pseudomonadota</taxon>
        <taxon>Betaproteobacteria</taxon>
        <taxon>Nitrosomonadales</taxon>
        <taxon>Methylophilaceae</taxon>
        <taxon>Methylovorus</taxon>
    </lineage>
</organism>